<evidence type="ECO:0000305" key="1"/>
<feature type="chain" id="PRO_0000210776" description="Beta-glucosidase A-3">
    <location>
        <begin position="1" status="less than"/>
        <end position="63" status="greater than"/>
    </location>
</feature>
<feature type="active site">
    <location>
        <position position="12"/>
    </location>
</feature>
<feature type="glycosylation site" description="N-linked (GlcNAc...) asparagine">
    <location>
        <position position="48"/>
    </location>
</feature>
<feature type="glycosylation site" description="N-linked (GlcNAc...) asparagine">
    <location>
        <position position="56"/>
    </location>
</feature>
<feature type="non-terminal residue">
    <location>
        <position position="1"/>
    </location>
</feature>
<feature type="non-terminal residue">
    <location>
        <position position="63"/>
    </location>
</feature>
<protein>
    <recommendedName>
        <fullName>Beta-glucosidase A-3</fullName>
        <ecNumber>3.2.1.21</ecNumber>
    </recommendedName>
    <alternativeName>
        <fullName>Beta-D-glucoside glucohydrolase</fullName>
    </alternativeName>
    <alternativeName>
        <fullName>Cellobiase</fullName>
    </alternativeName>
    <alternativeName>
        <fullName>Gentiobiase</fullName>
    </alternativeName>
</protein>
<keyword id="KW-0119">Carbohydrate metabolism</keyword>
<keyword id="KW-0136">Cellulose degradation</keyword>
<keyword id="KW-0903">Direct protein sequencing</keyword>
<keyword id="KW-0325">Glycoprotein</keyword>
<keyword id="KW-0326">Glycosidase</keyword>
<keyword id="KW-0378">Hydrolase</keyword>
<keyword id="KW-0624">Polysaccharide degradation</keyword>
<organism>
    <name type="scientific">Aspergillus wentii</name>
    <dbReference type="NCBI Taxonomy" id="5066"/>
    <lineage>
        <taxon>Eukaryota</taxon>
        <taxon>Fungi</taxon>
        <taxon>Dikarya</taxon>
        <taxon>Ascomycota</taxon>
        <taxon>Pezizomycotina</taxon>
        <taxon>Eurotiomycetes</taxon>
        <taxon>Eurotiomycetidae</taxon>
        <taxon>Eurotiales</taxon>
        <taxon>Aspergillaceae</taxon>
        <taxon>Aspergillus</taxon>
        <taxon>Aspergillus subgen. Cremei</taxon>
    </lineage>
</organism>
<reference key="1">
    <citation type="journal article" date="1980" name="Biochim. Biophys. Acta">
        <title>Isolation and structure of a tryptic glycopeptide from the active site of beta-glucosidase A3 from Aspergillus wentii.</title>
        <authorList>
            <person name="Bause E."/>
            <person name="Legler G."/>
        </authorList>
    </citation>
    <scope>PROTEIN SEQUENCE</scope>
</reference>
<dbReference type="EC" id="3.2.1.21"/>
<dbReference type="PIR" id="A29171">
    <property type="entry name" value="A29171"/>
</dbReference>
<dbReference type="CAZy" id="GH3">
    <property type="family name" value="Glycoside Hydrolase Family 3"/>
</dbReference>
<dbReference type="VEuPathDB" id="FungiDB:ASPWEDRAFT_108100"/>
<dbReference type="UniPathway" id="UPA00696"/>
<dbReference type="GO" id="GO:0008422">
    <property type="term" value="F:beta-glucosidase activity"/>
    <property type="evidence" value="ECO:0007669"/>
    <property type="project" value="UniProtKB-EC"/>
</dbReference>
<dbReference type="GO" id="GO:0030245">
    <property type="term" value="P:cellulose catabolic process"/>
    <property type="evidence" value="ECO:0007669"/>
    <property type="project" value="UniProtKB-UniPathway"/>
</dbReference>
<dbReference type="Gene3D" id="3.20.20.300">
    <property type="entry name" value="Glycoside hydrolase, family 3, N-terminal domain"/>
    <property type="match status" value="1"/>
</dbReference>
<dbReference type="InterPro" id="IPR050288">
    <property type="entry name" value="Cellulose_deg_GH3"/>
</dbReference>
<dbReference type="InterPro" id="IPR036962">
    <property type="entry name" value="Glyco_hydro_3_N_sf"/>
</dbReference>
<dbReference type="InterPro" id="IPR017853">
    <property type="entry name" value="Glycoside_hydrolase_SF"/>
</dbReference>
<dbReference type="PANTHER" id="PTHR42715">
    <property type="entry name" value="BETA-GLUCOSIDASE"/>
    <property type="match status" value="1"/>
</dbReference>
<dbReference type="PANTHER" id="PTHR42715:SF29">
    <property type="entry name" value="BETA-GLUCOSIDASE A-RELATED"/>
    <property type="match status" value="1"/>
</dbReference>
<dbReference type="SUPFAM" id="SSF51445">
    <property type="entry name" value="(Trans)glycosidases"/>
    <property type="match status" value="1"/>
</dbReference>
<name>BGL3_ASPWE</name>
<comment type="catalytic activity">
    <reaction>
        <text>Hydrolysis of terminal, non-reducing beta-D-glucosyl residues with release of beta-D-glucose.</text>
        <dbReference type="EC" id="3.2.1.21"/>
    </reaction>
</comment>
<comment type="pathway">
    <text>Glycan metabolism; cellulose degradation.</text>
</comment>
<comment type="similarity">
    <text evidence="1">Belongs to the glycosyl hydrolase 3 family.</text>
</comment>
<accession>P29090</accession>
<proteinExistence type="evidence at protein level"/>
<sequence length="63" mass="6689">AZLGFZGFVMSDWAAHHAGVSGALAGLBMGSMPGBVBYBSGTSYWGTNLTISLWVNGTVPZWR</sequence>